<evidence type="ECO:0000250" key="1">
    <source>
        <dbReference type="UniProtKB" id="Q02604"/>
    </source>
</evidence>
<evidence type="ECO:0000305" key="2"/>
<reference key="1">
    <citation type="submission" date="1997-06" db="EMBL/GenBank/DDBJ databases">
        <authorList>
            <person name="Suzuki M."/>
            <person name="Saito T."/>
            <person name="Konno K."/>
            <person name="Kamio Y."/>
            <person name="Itoh T."/>
        </authorList>
    </citation>
    <scope>NUCLEOTIDE SEQUENCE [GENOMIC DNA]</scope>
    <source>
        <strain>JCM 1229 / KCTC 3168</strain>
    </source>
</reference>
<reference key="2">
    <citation type="journal article" date="2005" name="Proc. Natl. Acad. Sci. U.S.A.">
        <title>Complete genome sequence of the probiotic lactic acid bacterium Lactobacillus acidophilus NCFM.</title>
        <authorList>
            <person name="Altermann E."/>
            <person name="Russell W.M."/>
            <person name="Azcarate-Peril M.A."/>
            <person name="Barrangou R."/>
            <person name="Buck B.L."/>
            <person name="McAuliffe O."/>
            <person name="Souther N."/>
            <person name="Dobson A."/>
            <person name="Duong T."/>
            <person name="Callanan M."/>
            <person name="Lick S."/>
            <person name="Hamrick A."/>
            <person name="Cano R."/>
            <person name="Klaenhammer T.R."/>
        </authorList>
    </citation>
    <scope>NUCLEOTIDE SEQUENCE [LARGE SCALE GENOMIC DNA]</scope>
    <source>
        <strain>ATCC 700396 / NCK56 / N2 / NCFM</strain>
    </source>
</reference>
<protein>
    <recommendedName>
        <fullName evidence="1">Beta-galactosidase small subunit</fullName>
        <shortName evidence="1">Beta-gal small subunit</shortName>
        <ecNumber evidence="1">3.2.1.23</ecNumber>
    </recommendedName>
</protein>
<organism>
    <name type="scientific">Lactobacillus acidophilus (strain ATCC 700396 / NCK56 / N2 / NCFM)</name>
    <dbReference type="NCBI Taxonomy" id="272621"/>
    <lineage>
        <taxon>Bacteria</taxon>
        <taxon>Bacillati</taxon>
        <taxon>Bacillota</taxon>
        <taxon>Bacilli</taxon>
        <taxon>Lactobacillales</taxon>
        <taxon>Lactobacillaceae</taxon>
        <taxon>Lactobacillus</taxon>
    </lineage>
</organism>
<feature type="chain" id="PRO_0000057666" description="Beta-galactosidase small subunit">
    <location>
        <begin position="1"/>
        <end position="316"/>
    </location>
</feature>
<comment type="function">
    <text evidence="1">Component of a beta-galactosidase.</text>
</comment>
<comment type="catalytic activity">
    <reaction evidence="1">
        <text>Hydrolysis of terminal non-reducing beta-D-galactose residues in beta-D-galactosides.</text>
        <dbReference type="EC" id="3.2.1.23"/>
    </reaction>
</comment>
<comment type="subunit">
    <text evidence="1">Heterodimer of a large (LacL) and a small subunit (LacM).</text>
</comment>
<comment type="similarity">
    <text evidence="2">Belongs to the bacterial beta-galactosidase small subunit family.</text>
</comment>
<dbReference type="EC" id="3.2.1.23" evidence="1"/>
<dbReference type="EMBL" id="AB004868">
    <property type="protein sequence ID" value="BAA20537.1"/>
    <property type="molecule type" value="Genomic_DNA"/>
</dbReference>
<dbReference type="EMBL" id="CP000033">
    <property type="protein sequence ID" value="AAV43288.1"/>
    <property type="molecule type" value="Genomic_DNA"/>
</dbReference>
<dbReference type="RefSeq" id="WP_011254473.1">
    <property type="nucleotide sequence ID" value="NC_006814.3"/>
</dbReference>
<dbReference type="RefSeq" id="YP_194319.1">
    <property type="nucleotide sequence ID" value="NC_006814.3"/>
</dbReference>
<dbReference type="SMR" id="O07685"/>
<dbReference type="STRING" id="272621.LBA1468"/>
<dbReference type="KEGG" id="lac:LBA1468"/>
<dbReference type="PATRIC" id="fig|272621.13.peg.1389"/>
<dbReference type="eggNOG" id="COG3250">
    <property type="taxonomic scope" value="Bacteria"/>
</dbReference>
<dbReference type="HOGENOM" id="CLU_075527_0_0_9"/>
<dbReference type="OrthoDB" id="1934936at2"/>
<dbReference type="BioCyc" id="LACI272621:G1G49-1437-MONOMER"/>
<dbReference type="Proteomes" id="UP000006381">
    <property type="component" value="Chromosome"/>
</dbReference>
<dbReference type="GO" id="GO:0009341">
    <property type="term" value="C:beta-galactosidase complex"/>
    <property type="evidence" value="ECO:0007669"/>
    <property type="project" value="InterPro"/>
</dbReference>
<dbReference type="GO" id="GO:0004565">
    <property type="term" value="F:beta-galactosidase activity"/>
    <property type="evidence" value="ECO:0007669"/>
    <property type="project" value="UniProtKB-EC"/>
</dbReference>
<dbReference type="GO" id="GO:0030246">
    <property type="term" value="F:carbohydrate binding"/>
    <property type="evidence" value="ECO:0007669"/>
    <property type="project" value="InterPro"/>
</dbReference>
<dbReference type="GO" id="GO:0005990">
    <property type="term" value="P:lactose catabolic process"/>
    <property type="evidence" value="ECO:0007669"/>
    <property type="project" value="TreeGrafter"/>
</dbReference>
<dbReference type="Gene3D" id="2.70.98.10">
    <property type="match status" value="1"/>
</dbReference>
<dbReference type="InterPro" id="IPR004199">
    <property type="entry name" value="B-gal_small/dom_5"/>
</dbReference>
<dbReference type="InterPro" id="IPR050347">
    <property type="entry name" value="Bact_Beta-galactosidase"/>
</dbReference>
<dbReference type="InterPro" id="IPR011013">
    <property type="entry name" value="Gal_mutarotase_sf_dom"/>
</dbReference>
<dbReference type="InterPro" id="IPR014718">
    <property type="entry name" value="GH-type_carb-bd"/>
</dbReference>
<dbReference type="PANTHER" id="PTHR46323">
    <property type="entry name" value="BETA-GALACTOSIDASE"/>
    <property type="match status" value="1"/>
</dbReference>
<dbReference type="PANTHER" id="PTHR46323:SF2">
    <property type="entry name" value="BETA-GALACTOSIDASE"/>
    <property type="match status" value="1"/>
</dbReference>
<dbReference type="Pfam" id="PF02929">
    <property type="entry name" value="Bgal_small_N"/>
    <property type="match status" value="1"/>
</dbReference>
<dbReference type="SMART" id="SM01038">
    <property type="entry name" value="Bgal_small_N"/>
    <property type="match status" value="1"/>
</dbReference>
<dbReference type="SUPFAM" id="SSF74650">
    <property type="entry name" value="Galactose mutarotase-like"/>
    <property type="match status" value="1"/>
</dbReference>
<proteinExistence type="inferred from homology"/>
<name>BGAM_LACAC</name>
<keyword id="KW-0326">Glycosidase</keyword>
<keyword id="KW-0378">Hydrolase</keyword>
<keyword id="KW-1185">Reference proteome</keyword>
<sequence length="316" mass="35817">MAYTNNLQIIYGDATLGITGKNFHYLFSYERGGLESLNINNKEWLYRVPTPTFWRATTDNDRGNGFNLKASQWLGADMFTKCTKIELKVDDRQFDELPIAPINNQFSNHEYADHVQIAFWYQTLTNPATDVKIIYNIDNTGCINIVMHYFGKKGLPPLPVIGMRFIMPTAATGFDYEGLSGETYPDRMAGAKEGKFHVDGLPVTKYLVPQENGMHMQTKALKITRSSTLNNADQESEFSLKLKQDKQPFNFSCLPYTAEELENATHLEELPLARRTVLVIAGAVRGVGGIDSWGADVEKQYHINPEKDYEFSFNLN</sequence>
<gene>
    <name type="primary">lacM</name>
    <name type="ordered locus">LBA1468</name>
</gene>
<accession>O07685</accession>
<accession>Q5FJ36</accession>